<accession>A0ZSF2</accession>
<feature type="chain" id="PRO_0000379795" description="Nacrein-like protein F">
    <location>
        <begin position="1"/>
        <end position="415"/>
    </location>
</feature>
<feature type="domain" description="Alpha-carbonic anhydrase" evidence="3">
    <location>
        <begin position="33"/>
        <end position="414"/>
    </location>
</feature>
<feature type="repeat" description="1">
    <location>
        <begin position="225"/>
        <end position="227"/>
    </location>
</feature>
<feature type="repeat" description="2">
    <location>
        <begin position="228"/>
        <end position="230"/>
    </location>
</feature>
<feature type="repeat" description="3">
    <location>
        <begin position="231"/>
        <end position="233"/>
    </location>
</feature>
<feature type="repeat" description="4">
    <location>
        <begin position="234"/>
        <end position="236"/>
    </location>
</feature>
<feature type="repeat" description="5">
    <location>
        <begin position="237"/>
        <end position="239"/>
    </location>
</feature>
<feature type="repeat" description="6">
    <location>
        <begin position="240"/>
        <end position="242"/>
    </location>
</feature>
<feature type="repeat" description="7">
    <location>
        <begin position="243"/>
        <end position="245"/>
    </location>
</feature>
<feature type="repeat" description="8">
    <location>
        <begin position="246"/>
        <end position="248"/>
    </location>
</feature>
<feature type="repeat" description="9">
    <location>
        <begin position="249"/>
        <end position="251"/>
    </location>
</feature>
<feature type="repeat" description="10">
    <location>
        <begin position="252"/>
        <end position="254"/>
    </location>
</feature>
<feature type="repeat" description="11">
    <location>
        <begin position="255"/>
        <end position="257"/>
    </location>
</feature>
<feature type="repeat" description="12">
    <location>
        <begin position="258"/>
        <end position="260"/>
    </location>
</feature>
<feature type="repeat" description="13">
    <location>
        <begin position="261"/>
        <end position="263"/>
    </location>
</feature>
<feature type="repeat" description="14">
    <location>
        <begin position="264"/>
        <end position="266"/>
    </location>
</feature>
<feature type="repeat" description="15">
    <location>
        <begin position="267"/>
        <end position="269"/>
    </location>
</feature>
<feature type="repeat" description="16">
    <location>
        <begin position="270"/>
        <end position="272"/>
    </location>
</feature>
<feature type="repeat" description="17">
    <location>
        <begin position="273"/>
        <end position="275"/>
    </location>
</feature>
<feature type="repeat" description="18">
    <location>
        <begin position="276"/>
        <end position="278"/>
    </location>
</feature>
<feature type="repeat" description="19">
    <location>
        <begin position="279"/>
        <end position="281"/>
    </location>
</feature>
<feature type="repeat" description="20">
    <location>
        <begin position="282"/>
        <end position="284"/>
    </location>
</feature>
<feature type="repeat" description="21">
    <location>
        <begin position="285"/>
        <end position="286"/>
    </location>
</feature>
<feature type="repeat" description="22">
    <location>
        <begin position="288"/>
        <end position="290"/>
    </location>
</feature>
<feature type="region of interest" description="Disordered" evidence="4">
    <location>
        <begin position="201"/>
        <end position="297"/>
    </location>
</feature>
<feature type="region of interest" description="22 X 3 AA approximate tandem repeats of G-X-N">
    <location>
        <begin position="225"/>
        <end position="290"/>
    </location>
</feature>
<feature type="compositionally biased region" description="Basic and acidic residues" evidence="4">
    <location>
        <begin position="207"/>
        <end position="219"/>
    </location>
</feature>
<feature type="compositionally biased region" description="Low complexity" evidence="4">
    <location>
        <begin position="220"/>
        <end position="289"/>
    </location>
</feature>
<feature type="binding site" evidence="3">
    <location>
        <position position="132"/>
    </location>
    <ligand>
        <name>Zn(2+)</name>
        <dbReference type="ChEBI" id="CHEBI:29105"/>
        <note>catalytic</note>
    </ligand>
</feature>
<feature type="binding site" evidence="3">
    <location>
        <position position="134"/>
    </location>
    <ligand>
        <name>Zn(2+)</name>
        <dbReference type="ChEBI" id="CHEBI:29105"/>
        <note>catalytic</note>
    </ligand>
</feature>
<feature type="binding site" evidence="3">
    <location>
        <position position="157"/>
    </location>
    <ligand>
        <name>Zn(2+)</name>
        <dbReference type="ChEBI" id="CHEBI:29105"/>
        <note>catalytic</note>
    </ligand>
</feature>
<feature type="binding site" evidence="1">
    <location>
        <begin position="355"/>
        <end position="356"/>
    </location>
    <ligand>
        <name>substrate</name>
    </ligand>
</feature>
<feature type="glycosylation site" description="N-linked (GlcNAc...) asparagine" evidence="2">
    <location>
        <position position="27"/>
    </location>
</feature>
<reference key="1">
    <citation type="journal article" date="2008" name="Mar. Biotechnol.">
        <title>Distribution and function of the nacrein-related proteins inferred from structural analysis.</title>
        <authorList>
            <person name="Norizuki M."/>
            <person name="Samata T."/>
        </authorList>
    </citation>
    <scope>NUCLEOTIDE SEQUENCE [MRNA]</scope>
    <scope>FUNCTION</scope>
    <scope>CRYSTALLIZATION</scope>
    <source>
        <tissue>Gill</tissue>
        <tissue>Mantle</tissue>
    </source>
</reference>
<organism>
    <name type="scientific">Pinctada fucata</name>
    <name type="common">Akoya pearl oyster</name>
    <name type="synonym">Pinctada imbricata fucata</name>
    <dbReference type="NCBI Taxonomy" id="50426"/>
    <lineage>
        <taxon>Eukaryota</taxon>
        <taxon>Metazoa</taxon>
        <taxon>Spiralia</taxon>
        <taxon>Lophotrochozoa</taxon>
        <taxon>Mollusca</taxon>
        <taxon>Bivalvia</taxon>
        <taxon>Autobranchia</taxon>
        <taxon>Pteriomorphia</taxon>
        <taxon>Pterioida</taxon>
        <taxon>Pterioidea</taxon>
        <taxon>Pteriidae</taxon>
        <taxon>Pinctada</taxon>
    </lineage>
</organism>
<proteinExistence type="evidence at protein level"/>
<protein>
    <recommendedName>
        <fullName>Nacrein-like protein F</fullName>
        <ecNumber>4.2.1.1</ecNumber>
    </recommendedName>
</protein>
<keyword id="KW-0106">Calcium</keyword>
<keyword id="KW-1015">Disulfide bond</keyword>
<keyword id="KW-0272">Extracellular matrix</keyword>
<keyword id="KW-0325">Glycoprotein</keyword>
<keyword id="KW-0456">Lyase</keyword>
<keyword id="KW-0479">Metal-binding</keyword>
<keyword id="KW-0677">Repeat</keyword>
<keyword id="KW-0964">Secreted</keyword>
<keyword id="KW-0862">Zinc</keyword>
<dbReference type="EC" id="4.2.1.1"/>
<dbReference type="EMBL" id="AB252479">
    <property type="protein sequence ID" value="BAF42329.1"/>
    <property type="molecule type" value="mRNA"/>
</dbReference>
<dbReference type="SMR" id="A0ZSF2"/>
<dbReference type="GO" id="GO:0005737">
    <property type="term" value="C:cytoplasm"/>
    <property type="evidence" value="ECO:0007669"/>
    <property type="project" value="TreeGrafter"/>
</dbReference>
<dbReference type="GO" id="GO:0005576">
    <property type="term" value="C:extracellular region"/>
    <property type="evidence" value="ECO:0007669"/>
    <property type="project" value="UniProtKB-KW"/>
</dbReference>
<dbReference type="GO" id="GO:0004089">
    <property type="term" value="F:carbonate dehydratase activity"/>
    <property type="evidence" value="ECO:0007669"/>
    <property type="project" value="UniProtKB-EC"/>
</dbReference>
<dbReference type="GO" id="GO:0008270">
    <property type="term" value="F:zinc ion binding"/>
    <property type="evidence" value="ECO:0007669"/>
    <property type="project" value="InterPro"/>
</dbReference>
<dbReference type="CDD" id="cd00326">
    <property type="entry name" value="alpha_CA"/>
    <property type="match status" value="1"/>
</dbReference>
<dbReference type="Gene3D" id="3.10.200.10">
    <property type="entry name" value="Alpha carbonic anhydrase"/>
    <property type="match status" value="2"/>
</dbReference>
<dbReference type="InterPro" id="IPR001148">
    <property type="entry name" value="CA_dom"/>
</dbReference>
<dbReference type="InterPro" id="IPR036398">
    <property type="entry name" value="CA_dom_sf"/>
</dbReference>
<dbReference type="InterPro" id="IPR023561">
    <property type="entry name" value="Carbonic_anhydrase_a-class"/>
</dbReference>
<dbReference type="InterPro" id="IPR008160">
    <property type="entry name" value="Collagen"/>
</dbReference>
<dbReference type="PANTHER" id="PTHR18952">
    <property type="entry name" value="CARBONIC ANHYDRASE"/>
    <property type="match status" value="1"/>
</dbReference>
<dbReference type="PANTHER" id="PTHR18952:SF141">
    <property type="entry name" value="CARBONIC ANHYDRASE"/>
    <property type="match status" value="1"/>
</dbReference>
<dbReference type="Pfam" id="PF00194">
    <property type="entry name" value="Carb_anhydrase"/>
    <property type="match status" value="2"/>
</dbReference>
<dbReference type="Pfam" id="PF01391">
    <property type="entry name" value="Collagen"/>
    <property type="match status" value="2"/>
</dbReference>
<dbReference type="SMART" id="SM01057">
    <property type="entry name" value="Carb_anhydrase"/>
    <property type="match status" value="1"/>
</dbReference>
<dbReference type="SUPFAM" id="SSF51069">
    <property type="entry name" value="Carbonic anhydrase"/>
    <property type="match status" value="1"/>
</dbReference>
<dbReference type="PROSITE" id="PS51144">
    <property type="entry name" value="ALPHA_CA_2"/>
    <property type="match status" value="1"/>
</dbReference>
<comment type="function">
    <text evidence="1 5">Acts as a negative regulator for calcification in the shells of mollusks. May function both as a calcium concentrator and as a carbonic anhydrase required for production of carbonate ions, which are assembled to CaCO(3) at mineralization sites. Is important for shell formation in both the calcitic prismatic layer and the aragonitic nacreous layer (By similarity). Shows inhibitory activity of crystal formation when present in free state but, when attached to the insoluble matrix, may regulate the form and size of aragonite crystal.</text>
</comment>
<comment type="catalytic activity">
    <reaction>
        <text>hydrogencarbonate + H(+) = CO2 + H2O</text>
        <dbReference type="Rhea" id="RHEA:10748"/>
        <dbReference type="ChEBI" id="CHEBI:15377"/>
        <dbReference type="ChEBI" id="CHEBI:15378"/>
        <dbReference type="ChEBI" id="CHEBI:16526"/>
        <dbReference type="ChEBI" id="CHEBI:17544"/>
        <dbReference type="EC" id="4.2.1.1"/>
    </reaction>
</comment>
<comment type="cofactor">
    <cofactor evidence="1">
        <name>Zn(2+)</name>
        <dbReference type="ChEBI" id="CHEBI:29105"/>
    </cofactor>
</comment>
<comment type="subunit">
    <text evidence="1">Homooligomer; disulfide-linked. May also be disulfide-linked to insoluble organic matrix (By similarity).</text>
</comment>
<comment type="subcellular location">
    <subcellularLocation>
        <location evidence="1">Secreted</location>
        <location evidence="1">Extracellular space</location>
        <location evidence="1">Extracellular matrix</location>
    </subcellularLocation>
</comment>
<comment type="tissue specificity">
    <text>Expressed in the mantle.</text>
</comment>
<comment type="miscellaneous">
    <text>Two hypotheses for calcium binding are proposed. Either the Gly-Xaa-Asn repeat domain bind calcium or sulfite and sialic acid provide the necessary negative charge in the N-glycan to promote calcium uptake.</text>
</comment>
<comment type="similarity">
    <text evidence="6">Belongs to the alpha-carbonic anhydrase family.</text>
</comment>
<sequence length="415" mass="46753">ASMFKHDHYMDNGVRYPNGDGICKQLNETKCDAGFSYDRSICEGPRYWQTISKCFIACGIGQRQSPINIVSYDAKFRQRLPKLKFKPHMEKLKTEVTNHQNRAPEFEPEDGENLYVKLNNLVDGHYKFHNLHVHNGRTRRKGSEHSVNGRFTPMEAHLVFHHDEQTHFEPTRTKLGGAFPGHNDFVVVGVFLEVGDDGFGDEPDDEECKHILKGHHPDNNENGNGDNGNNGYNGDNGNNGDNGNNGYNGDNGNNGVNGNNGYNGDNGNNGDNGNNGENGNNGENGNNGENGHKHGCRVKKAKHLSRILECAYRNDKVREFKKVGEEEGLDVHLTPEMALPPLKYRHYYTYEGSLTTPPCTESVLWVVQKCHVQVSRRVLHALRKVEGYKDGTTLRKYGTRRPTQKNKVTVYKSFK</sequence>
<evidence type="ECO:0000250" key="1"/>
<evidence type="ECO:0000255" key="2"/>
<evidence type="ECO:0000255" key="3">
    <source>
        <dbReference type="PROSITE-ProRule" id="PRU01134"/>
    </source>
</evidence>
<evidence type="ECO:0000256" key="4">
    <source>
        <dbReference type="SAM" id="MobiDB-lite"/>
    </source>
</evidence>
<evidence type="ECO:0000269" key="5">
    <source>
    </source>
</evidence>
<evidence type="ECO:0000305" key="6"/>
<name>MAF_PINFU</name>